<sequence length="227" mass="25959">MELVFIRHGQSEWNAKNLFTGWRDVKLSEQGLAEAAAAGKKLKENGYEFDIAFTSVLTRAIKTCNIVLEESDQLFVPQIKTWRLNERHYGQLQGLDKKQTAEQYGDEQVRIWRRSYDTLPPLLDKDDEFSAHKDRRYAHLPADVVPDGENLKVTLERVLPFWEDQIAPAILSGKRVLVAAHGNSLRALAKHIEGISDEDIMGLEIPTGQPLVYKLDDNLKVIEKFYL</sequence>
<name>GPMA_NEIMB</name>
<comment type="function">
    <text evidence="1">Catalyzes the interconversion of 2-phosphoglycerate and 3-phosphoglycerate.</text>
</comment>
<comment type="catalytic activity">
    <reaction evidence="1">
        <text>(2R)-2-phosphoglycerate = (2R)-3-phosphoglycerate</text>
        <dbReference type="Rhea" id="RHEA:15901"/>
        <dbReference type="ChEBI" id="CHEBI:58272"/>
        <dbReference type="ChEBI" id="CHEBI:58289"/>
        <dbReference type="EC" id="5.4.2.11"/>
    </reaction>
</comment>
<comment type="pathway">
    <text evidence="1">Carbohydrate degradation; glycolysis; pyruvate from D-glyceraldehyde 3-phosphate: step 3/5.</text>
</comment>
<comment type="subunit">
    <text evidence="1">Homodimer.</text>
</comment>
<comment type="similarity">
    <text evidence="1">Belongs to the phosphoglycerate mutase family. BPG-dependent PGAM subfamily.</text>
</comment>
<accession>Q9JYF7</accession>
<reference key="1">
    <citation type="journal article" date="2000" name="Science">
        <title>Complete genome sequence of Neisseria meningitidis serogroup B strain MC58.</title>
        <authorList>
            <person name="Tettelin H."/>
            <person name="Saunders N.J."/>
            <person name="Heidelberg J.F."/>
            <person name="Jeffries A.C."/>
            <person name="Nelson K.E."/>
            <person name="Eisen J.A."/>
            <person name="Ketchum K.A."/>
            <person name="Hood D.W."/>
            <person name="Peden J.F."/>
            <person name="Dodson R.J."/>
            <person name="Nelson W.C."/>
            <person name="Gwinn M.L."/>
            <person name="DeBoy R.T."/>
            <person name="Peterson J.D."/>
            <person name="Hickey E.K."/>
            <person name="Haft D.H."/>
            <person name="Salzberg S.L."/>
            <person name="White O."/>
            <person name="Fleischmann R.D."/>
            <person name="Dougherty B.A."/>
            <person name="Mason T.M."/>
            <person name="Ciecko A."/>
            <person name="Parksey D.S."/>
            <person name="Blair E."/>
            <person name="Cittone H."/>
            <person name="Clark E.B."/>
            <person name="Cotton M.D."/>
            <person name="Utterback T.R."/>
            <person name="Khouri H.M."/>
            <person name="Qin H."/>
            <person name="Vamathevan J.J."/>
            <person name="Gill J."/>
            <person name="Scarlato V."/>
            <person name="Masignani V."/>
            <person name="Pizza M."/>
            <person name="Grandi G."/>
            <person name="Sun L."/>
            <person name="Smith H.O."/>
            <person name="Fraser C.M."/>
            <person name="Moxon E.R."/>
            <person name="Rappuoli R."/>
            <person name="Venter J.C."/>
        </authorList>
    </citation>
    <scope>NUCLEOTIDE SEQUENCE [LARGE SCALE GENOMIC DNA]</scope>
    <source>
        <strain>ATCC BAA-335 / MC58</strain>
    </source>
</reference>
<gene>
    <name evidence="1" type="primary">gpmA</name>
    <name type="ordered locus">NMB1604</name>
</gene>
<keyword id="KW-0312">Gluconeogenesis</keyword>
<keyword id="KW-0324">Glycolysis</keyword>
<keyword id="KW-0413">Isomerase</keyword>
<keyword id="KW-1185">Reference proteome</keyword>
<dbReference type="EC" id="5.4.2.11" evidence="1"/>
<dbReference type="EMBL" id="AE002098">
    <property type="protein sequence ID" value="AAF41956.1"/>
    <property type="molecule type" value="Genomic_DNA"/>
</dbReference>
<dbReference type="PIR" id="F81064">
    <property type="entry name" value="F81064"/>
</dbReference>
<dbReference type="RefSeq" id="NP_274610.1">
    <property type="nucleotide sequence ID" value="NC_003112.2"/>
</dbReference>
<dbReference type="RefSeq" id="WP_002225017.1">
    <property type="nucleotide sequence ID" value="NC_003112.2"/>
</dbReference>
<dbReference type="SMR" id="Q9JYF7"/>
<dbReference type="FunCoup" id="Q9JYF7">
    <property type="interactions" value="413"/>
</dbReference>
<dbReference type="STRING" id="122586.NMB1604"/>
<dbReference type="PaxDb" id="122586-NMB1604"/>
<dbReference type="KEGG" id="nme:NMB1604"/>
<dbReference type="PATRIC" id="fig|122586.8.peg.2056"/>
<dbReference type="HOGENOM" id="CLU_033323_1_5_4"/>
<dbReference type="InParanoid" id="Q9JYF7"/>
<dbReference type="OrthoDB" id="9781415at2"/>
<dbReference type="UniPathway" id="UPA00109">
    <property type="reaction ID" value="UER00186"/>
</dbReference>
<dbReference type="Proteomes" id="UP000000425">
    <property type="component" value="Chromosome"/>
</dbReference>
<dbReference type="GO" id="GO:0004619">
    <property type="term" value="F:phosphoglycerate mutase activity"/>
    <property type="evidence" value="ECO:0007669"/>
    <property type="project" value="UniProtKB-EC"/>
</dbReference>
<dbReference type="GO" id="GO:0006094">
    <property type="term" value="P:gluconeogenesis"/>
    <property type="evidence" value="ECO:0007669"/>
    <property type="project" value="UniProtKB-UniRule"/>
</dbReference>
<dbReference type="GO" id="GO:0006096">
    <property type="term" value="P:glycolytic process"/>
    <property type="evidence" value="ECO:0007669"/>
    <property type="project" value="UniProtKB-UniRule"/>
</dbReference>
<dbReference type="CDD" id="cd07067">
    <property type="entry name" value="HP_PGM_like"/>
    <property type="match status" value="1"/>
</dbReference>
<dbReference type="FunFam" id="3.40.50.1240:FF:000003">
    <property type="entry name" value="2,3-bisphosphoglycerate-dependent phosphoglycerate mutase"/>
    <property type="match status" value="1"/>
</dbReference>
<dbReference type="Gene3D" id="3.40.50.1240">
    <property type="entry name" value="Phosphoglycerate mutase-like"/>
    <property type="match status" value="1"/>
</dbReference>
<dbReference type="HAMAP" id="MF_01039">
    <property type="entry name" value="PGAM_GpmA"/>
    <property type="match status" value="1"/>
</dbReference>
<dbReference type="InterPro" id="IPR013078">
    <property type="entry name" value="His_Pase_superF_clade-1"/>
</dbReference>
<dbReference type="InterPro" id="IPR029033">
    <property type="entry name" value="His_PPase_superfam"/>
</dbReference>
<dbReference type="InterPro" id="IPR005952">
    <property type="entry name" value="Phosphogly_mut1"/>
</dbReference>
<dbReference type="NCBIfam" id="TIGR01258">
    <property type="entry name" value="pgm_1"/>
    <property type="match status" value="1"/>
</dbReference>
<dbReference type="NCBIfam" id="NF010713">
    <property type="entry name" value="PRK14115.1"/>
    <property type="match status" value="1"/>
</dbReference>
<dbReference type="NCBIfam" id="NF010716">
    <property type="entry name" value="PRK14118.1"/>
    <property type="match status" value="1"/>
</dbReference>
<dbReference type="PANTHER" id="PTHR11931">
    <property type="entry name" value="PHOSPHOGLYCERATE MUTASE"/>
    <property type="match status" value="1"/>
</dbReference>
<dbReference type="Pfam" id="PF00300">
    <property type="entry name" value="His_Phos_1"/>
    <property type="match status" value="1"/>
</dbReference>
<dbReference type="PIRSF" id="PIRSF000709">
    <property type="entry name" value="6PFK_2-Ptase"/>
    <property type="match status" value="1"/>
</dbReference>
<dbReference type="SMART" id="SM00855">
    <property type="entry name" value="PGAM"/>
    <property type="match status" value="1"/>
</dbReference>
<dbReference type="SUPFAM" id="SSF53254">
    <property type="entry name" value="Phosphoglycerate mutase-like"/>
    <property type="match status" value="1"/>
</dbReference>
<feature type="chain" id="PRO_0000179896" description="2,3-bisphosphoglycerate-dependent phosphoglycerate mutase">
    <location>
        <begin position="1"/>
        <end position="227"/>
    </location>
</feature>
<feature type="active site" description="Tele-phosphohistidine intermediate" evidence="1">
    <location>
        <position position="8"/>
    </location>
</feature>
<feature type="active site" description="Proton donor/acceptor" evidence="1">
    <location>
        <position position="86"/>
    </location>
</feature>
<feature type="binding site" evidence="1">
    <location>
        <begin position="7"/>
        <end position="14"/>
    </location>
    <ligand>
        <name>substrate</name>
    </ligand>
</feature>
<feature type="binding site" evidence="1">
    <location>
        <begin position="20"/>
        <end position="21"/>
    </location>
    <ligand>
        <name>substrate</name>
    </ligand>
</feature>
<feature type="binding site" evidence="1">
    <location>
        <position position="59"/>
    </location>
    <ligand>
        <name>substrate</name>
    </ligand>
</feature>
<feature type="binding site" evidence="1">
    <location>
        <begin position="86"/>
        <end position="89"/>
    </location>
    <ligand>
        <name>substrate</name>
    </ligand>
</feature>
<feature type="binding site" evidence="1">
    <location>
        <position position="97"/>
    </location>
    <ligand>
        <name>substrate</name>
    </ligand>
</feature>
<feature type="binding site" evidence="1">
    <location>
        <begin position="113"/>
        <end position="114"/>
    </location>
    <ligand>
        <name>substrate</name>
    </ligand>
</feature>
<feature type="binding site" evidence="1">
    <location>
        <begin position="182"/>
        <end position="183"/>
    </location>
    <ligand>
        <name>substrate</name>
    </ligand>
</feature>
<feature type="site" description="Transition state stabilizer" evidence="1">
    <location>
        <position position="181"/>
    </location>
</feature>
<evidence type="ECO:0000255" key="1">
    <source>
        <dbReference type="HAMAP-Rule" id="MF_01039"/>
    </source>
</evidence>
<organism>
    <name type="scientific">Neisseria meningitidis serogroup B (strain ATCC BAA-335 / MC58)</name>
    <dbReference type="NCBI Taxonomy" id="122586"/>
    <lineage>
        <taxon>Bacteria</taxon>
        <taxon>Pseudomonadati</taxon>
        <taxon>Pseudomonadota</taxon>
        <taxon>Betaproteobacteria</taxon>
        <taxon>Neisseriales</taxon>
        <taxon>Neisseriaceae</taxon>
        <taxon>Neisseria</taxon>
    </lineage>
</organism>
<proteinExistence type="inferred from homology"/>
<protein>
    <recommendedName>
        <fullName evidence="1">2,3-bisphosphoglycerate-dependent phosphoglycerate mutase</fullName>
        <shortName evidence="1">BPG-dependent PGAM</shortName>
        <shortName evidence="1">PGAM</shortName>
        <shortName evidence="1">Phosphoglyceromutase</shortName>
        <shortName evidence="1">dPGM</shortName>
        <ecNumber evidence="1">5.4.2.11</ecNumber>
    </recommendedName>
</protein>